<gene>
    <name type="primary">ykgF</name>
    <name type="ordered locus">b0307</name>
    <name type="ordered locus">JW0300</name>
</gene>
<organism>
    <name type="scientific">Escherichia coli (strain K12)</name>
    <dbReference type="NCBI Taxonomy" id="83333"/>
    <lineage>
        <taxon>Bacteria</taxon>
        <taxon>Pseudomonadati</taxon>
        <taxon>Pseudomonadota</taxon>
        <taxon>Gammaproteobacteria</taxon>
        <taxon>Enterobacterales</taxon>
        <taxon>Enterobacteriaceae</taxon>
        <taxon>Escherichia</taxon>
    </lineage>
</organism>
<sequence length="475" mass="53052">MSIKTSNTDFKTRIRQQIEDPIMRKAVANAQQRIGANRQKMVDELGHWEEWRDRAAQIRDHVLSNLDAYLYQLSEKVTQNGGHVYFARTKEDATRYILQVAQRKNARKVVKSKSMVTEEIGVNHVLQDAGIQVIETDLGEYILQLDQDPPSHVVVPAIHKDRHQIRRVLHERLGYEGPETPEAMTLFIRQKIREDFLSAEIGITGCNFAVAETGSVCLVTNEGNARMCTTLPKTHIAVMGMERIAPTFAEVDVLITMLARSAVGARLTGYNTWLTGPREAGHVDGPEEFHLVIVDNGRSEVLASEFRDVLRCIRCGACMNTCPAYRHIGGHGYGSIYPGPIGAVISPLLGGYKDFKDLPYACSLCTACDNVCPVRIPLSKLILRHRRVMAEKGITAKAEQRAIKMFAYANSHPGLWKVGMMAGAHAASWFINGGKTPLKFGAISDWMEARDLPEADGESFRSWFKKHQAQEKKNG</sequence>
<accession>P77536</accession>
<accession>Q2MCB5</accession>
<proteinExistence type="inferred from homology"/>
<keyword id="KW-0004">4Fe-4S</keyword>
<keyword id="KW-0249">Electron transport</keyword>
<keyword id="KW-0408">Iron</keyword>
<keyword id="KW-0411">Iron-sulfur</keyword>
<keyword id="KW-0479">Metal-binding</keyword>
<keyword id="KW-1185">Reference proteome</keyword>
<keyword id="KW-0677">Repeat</keyword>
<keyword id="KW-0813">Transport</keyword>
<reference key="1">
    <citation type="submission" date="1997-01" db="EMBL/GenBank/DDBJ databases">
        <title>Sequence of minutes 4-25 of Escherichia coli.</title>
        <authorList>
            <person name="Chung E."/>
            <person name="Allen E."/>
            <person name="Araujo R."/>
            <person name="Aparicio A.M."/>
            <person name="Davis K."/>
            <person name="Duncan M."/>
            <person name="Federspiel N."/>
            <person name="Hyman R."/>
            <person name="Kalman S."/>
            <person name="Komp C."/>
            <person name="Kurdi O."/>
            <person name="Lew H."/>
            <person name="Lin D."/>
            <person name="Namath A."/>
            <person name="Oefner P."/>
            <person name="Roberts D."/>
            <person name="Schramm S."/>
            <person name="Davis R.W."/>
        </authorList>
    </citation>
    <scope>NUCLEOTIDE SEQUENCE [LARGE SCALE GENOMIC DNA]</scope>
    <source>
        <strain>K12 / MG1655 / ATCC 47076</strain>
    </source>
</reference>
<reference key="2">
    <citation type="journal article" date="1997" name="Science">
        <title>The complete genome sequence of Escherichia coli K-12.</title>
        <authorList>
            <person name="Blattner F.R."/>
            <person name="Plunkett G. III"/>
            <person name="Bloch C.A."/>
            <person name="Perna N.T."/>
            <person name="Burland V."/>
            <person name="Riley M."/>
            <person name="Collado-Vides J."/>
            <person name="Glasner J.D."/>
            <person name="Rode C.K."/>
            <person name="Mayhew G.F."/>
            <person name="Gregor J."/>
            <person name="Davis N.W."/>
            <person name="Kirkpatrick H.A."/>
            <person name="Goeden M.A."/>
            <person name="Rose D.J."/>
            <person name="Mau B."/>
            <person name="Shao Y."/>
        </authorList>
    </citation>
    <scope>NUCLEOTIDE SEQUENCE [LARGE SCALE GENOMIC DNA]</scope>
    <source>
        <strain>K12 / MG1655 / ATCC 47076</strain>
    </source>
</reference>
<reference key="3">
    <citation type="journal article" date="2006" name="Mol. Syst. Biol.">
        <title>Highly accurate genome sequences of Escherichia coli K-12 strains MG1655 and W3110.</title>
        <authorList>
            <person name="Hayashi K."/>
            <person name="Morooka N."/>
            <person name="Yamamoto Y."/>
            <person name="Fujita K."/>
            <person name="Isono K."/>
            <person name="Choi S."/>
            <person name="Ohtsubo E."/>
            <person name="Baba T."/>
            <person name="Wanner B.L."/>
            <person name="Mori H."/>
            <person name="Horiuchi T."/>
        </authorList>
    </citation>
    <scope>NUCLEOTIDE SEQUENCE [LARGE SCALE GENOMIC DNA]</scope>
    <source>
        <strain>K12 / W3110 / ATCC 27325 / DSM 5911</strain>
    </source>
</reference>
<reference key="4">
    <citation type="journal article" date="2009" name="J. Bacteriol.">
        <title>A widely conserved gene cluster required for lactate utilization in Bacillus subtilis and its involvement in biofilm formation.</title>
        <authorList>
            <person name="Chai Y."/>
            <person name="Kolter R."/>
            <person name="Losick R."/>
        </authorList>
    </citation>
    <scope>LACK OF COMPLEMENTATION OF B.SUBTILIS LUTABC OPERON</scope>
    <source>
        <strain>K12</strain>
    </source>
</reference>
<name>YKGF_ECOLI</name>
<feature type="chain" id="PRO_0000159302" description="Uncharacterized electron transport protein YkgF">
    <location>
        <begin position="1"/>
        <end position="475"/>
    </location>
</feature>
<feature type="domain" description="4Fe-4S ferredoxin-type 1" evidence="2">
    <location>
        <begin position="303"/>
        <end position="333"/>
    </location>
</feature>
<feature type="domain" description="4Fe-4S ferredoxin-type 2" evidence="2">
    <location>
        <begin position="352"/>
        <end position="381"/>
    </location>
</feature>
<feature type="binding site" evidence="1">
    <location>
        <position position="312"/>
    </location>
    <ligand>
        <name>[4Fe-4S] cluster</name>
        <dbReference type="ChEBI" id="CHEBI:49883"/>
        <label>1</label>
    </ligand>
</feature>
<feature type="binding site" evidence="1">
    <location>
        <position position="315"/>
    </location>
    <ligand>
        <name>[4Fe-4S] cluster</name>
        <dbReference type="ChEBI" id="CHEBI:49883"/>
        <label>1</label>
    </ligand>
</feature>
<feature type="binding site" evidence="1">
    <location>
        <position position="318"/>
    </location>
    <ligand>
        <name>[4Fe-4S] cluster</name>
        <dbReference type="ChEBI" id="CHEBI:49883"/>
        <label>1</label>
    </ligand>
</feature>
<feature type="binding site" evidence="1">
    <location>
        <position position="322"/>
    </location>
    <ligand>
        <name>[4Fe-4S] cluster</name>
        <dbReference type="ChEBI" id="CHEBI:49883"/>
        <label>2</label>
    </ligand>
</feature>
<feature type="binding site" evidence="1">
    <location>
        <position position="362"/>
    </location>
    <ligand>
        <name>[4Fe-4S] cluster</name>
        <dbReference type="ChEBI" id="CHEBI:49883"/>
        <label>2</label>
    </ligand>
</feature>
<feature type="binding site" evidence="1">
    <location>
        <position position="365"/>
    </location>
    <ligand>
        <name>[4Fe-4S] cluster</name>
        <dbReference type="ChEBI" id="CHEBI:49883"/>
        <label>2</label>
    </ligand>
</feature>
<feature type="binding site" evidence="1">
    <location>
        <position position="368"/>
    </location>
    <ligand>
        <name>[4Fe-4S] cluster</name>
        <dbReference type="ChEBI" id="CHEBI:49883"/>
        <label>2</label>
    </ligand>
</feature>
<feature type="binding site" evidence="1">
    <location>
        <position position="372"/>
    </location>
    <ligand>
        <name>[4Fe-4S] cluster</name>
        <dbReference type="ChEBI" id="CHEBI:49883"/>
        <label>1</label>
    </ligand>
</feature>
<protein>
    <recommendedName>
        <fullName>Uncharacterized electron transport protein YkgF</fullName>
    </recommendedName>
</protein>
<dbReference type="EMBL" id="U73857">
    <property type="protein sequence ID" value="AAB18034.1"/>
    <property type="molecule type" value="Genomic_DNA"/>
</dbReference>
<dbReference type="EMBL" id="U00096">
    <property type="protein sequence ID" value="AAC73410.1"/>
    <property type="molecule type" value="Genomic_DNA"/>
</dbReference>
<dbReference type="EMBL" id="AP009048">
    <property type="protein sequence ID" value="BAE76091.1"/>
    <property type="molecule type" value="Genomic_DNA"/>
</dbReference>
<dbReference type="PIR" id="C64757">
    <property type="entry name" value="C64757"/>
</dbReference>
<dbReference type="RefSeq" id="NP_414841.1">
    <property type="nucleotide sequence ID" value="NC_000913.3"/>
</dbReference>
<dbReference type="RefSeq" id="WP_000023927.1">
    <property type="nucleotide sequence ID" value="NZ_STEB01000020.1"/>
</dbReference>
<dbReference type="BioGRID" id="4260872">
    <property type="interactions" value="34"/>
</dbReference>
<dbReference type="FunCoup" id="P77536">
    <property type="interactions" value="181"/>
</dbReference>
<dbReference type="IntAct" id="P77536">
    <property type="interactions" value="26"/>
</dbReference>
<dbReference type="STRING" id="511145.b0307"/>
<dbReference type="jPOST" id="P77536"/>
<dbReference type="PaxDb" id="511145-b0307"/>
<dbReference type="EnsemblBacteria" id="AAC73410">
    <property type="protein sequence ID" value="AAC73410"/>
    <property type="gene ID" value="b0307"/>
</dbReference>
<dbReference type="GeneID" id="944980"/>
<dbReference type="KEGG" id="ecj:JW0300"/>
<dbReference type="KEGG" id="eco:b0307"/>
<dbReference type="KEGG" id="ecoc:C3026_01505"/>
<dbReference type="KEGG" id="ecoc:C3026_24680"/>
<dbReference type="PATRIC" id="fig|1411691.4.peg.1970"/>
<dbReference type="EchoBASE" id="EB3353"/>
<dbReference type="eggNOG" id="COG1139">
    <property type="taxonomic scope" value="Bacteria"/>
</dbReference>
<dbReference type="HOGENOM" id="CLU_027059_2_0_6"/>
<dbReference type="InParanoid" id="P77536"/>
<dbReference type="OMA" id="HCPVYDK"/>
<dbReference type="OrthoDB" id="5289041at2"/>
<dbReference type="PhylomeDB" id="P77536"/>
<dbReference type="BioCyc" id="EcoCyc:G6177-MONOMER"/>
<dbReference type="PRO" id="PR:P77536"/>
<dbReference type="Proteomes" id="UP000000625">
    <property type="component" value="Chromosome"/>
</dbReference>
<dbReference type="GO" id="GO:0051539">
    <property type="term" value="F:4 iron, 4 sulfur cluster binding"/>
    <property type="evidence" value="ECO:0007669"/>
    <property type="project" value="UniProtKB-KW"/>
</dbReference>
<dbReference type="GO" id="GO:0004459">
    <property type="term" value="F:L-lactate dehydrogenase activity"/>
    <property type="evidence" value="ECO:0000269"/>
    <property type="project" value="EcoCyc"/>
</dbReference>
<dbReference type="GO" id="GO:0046872">
    <property type="term" value="F:metal ion binding"/>
    <property type="evidence" value="ECO:0007669"/>
    <property type="project" value="UniProtKB-KW"/>
</dbReference>
<dbReference type="GO" id="GO:1903457">
    <property type="term" value="P:lactate catabolic process"/>
    <property type="evidence" value="ECO:0000269"/>
    <property type="project" value="EcoCyc"/>
</dbReference>
<dbReference type="Gene3D" id="1.10.1060.10">
    <property type="entry name" value="Alpha-helical ferredoxin"/>
    <property type="match status" value="1"/>
</dbReference>
<dbReference type="Gene3D" id="3.40.50.10420">
    <property type="entry name" value="NagB/RpiA/CoA transferase-like"/>
    <property type="match status" value="1"/>
</dbReference>
<dbReference type="InterPro" id="IPR017896">
    <property type="entry name" value="4Fe4S_Fe-S-bd"/>
</dbReference>
<dbReference type="InterPro" id="IPR017900">
    <property type="entry name" value="4Fe4S_Fe_S_CS"/>
</dbReference>
<dbReference type="InterPro" id="IPR024185">
    <property type="entry name" value="FTHF_cligase-like_sf"/>
</dbReference>
<dbReference type="InterPro" id="IPR009051">
    <property type="entry name" value="Helical_ferredxn"/>
</dbReference>
<dbReference type="InterPro" id="IPR003741">
    <property type="entry name" value="LUD_dom"/>
</dbReference>
<dbReference type="InterPro" id="IPR004452">
    <property type="entry name" value="LutB/LldF"/>
</dbReference>
<dbReference type="InterPro" id="IPR024569">
    <property type="entry name" value="LutB_C"/>
</dbReference>
<dbReference type="InterPro" id="IPR037171">
    <property type="entry name" value="NagB/RpiA_transferase-like"/>
</dbReference>
<dbReference type="NCBIfam" id="TIGR00273">
    <property type="entry name" value="LutB/LldF family L-lactate oxidation iron-sulfur protein"/>
    <property type="match status" value="1"/>
</dbReference>
<dbReference type="PANTHER" id="PTHR47153">
    <property type="entry name" value="LACTATE UTILIZATION PROTEIN B"/>
    <property type="match status" value="1"/>
</dbReference>
<dbReference type="PANTHER" id="PTHR47153:SF2">
    <property type="entry name" value="LACTATE UTILIZATION PROTEIN B"/>
    <property type="match status" value="1"/>
</dbReference>
<dbReference type="Pfam" id="PF13183">
    <property type="entry name" value="Fer4_8"/>
    <property type="match status" value="1"/>
</dbReference>
<dbReference type="Pfam" id="PF02589">
    <property type="entry name" value="LUD_dom"/>
    <property type="match status" value="1"/>
</dbReference>
<dbReference type="Pfam" id="PF11870">
    <property type="entry name" value="LutB_C"/>
    <property type="match status" value="1"/>
</dbReference>
<dbReference type="SUPFAM" id="SSF46548">
    <property type="entry name" value="alpha-helical ferredoxin"/>
    <property type="match status" value="1"/>
</dbReference>
<dbReference type="SUPFAM" id="SSF100950">
    <property type="entry name" value="NagB/RpiA/CoA transferase-like"/>
    <property type="match status" value="1"/>
</dbReference>
<dbReference type="PROSITE" id="PS00198">
    <property type="entry name" value="4FE4S_FER_1"/>
    <property type="match status" value="2"/>
</dbReference>
<dbReference type="PROSITE" id="PS51379">
    <property type="entry name" value="4FE4S_FER_2"/>
    <property type="match status" value="2"/>
</dbReference>
<comment type="miscellaneous">
    <text>The E.coli ykgEFG operon is a clear homolog of the B.subtilis lutABC operon, however it is not able of restoring L-lactate utilization to the B.subtilis mutant for lutABC operon. Thus, ykgEFG operon may contribute to lactate catabolism in E.coli, but under conditions other than those tested, or alternatively, the ykgEFG operon may be responsible for the catabolism of a metabolite other than (but perhaps related to) lactate in E.coli.</text>
</comment>
<comment type="similarity">
    <text evidence="3">Belongs to the LutB/YkgF family.</text>
</comment>
<evidence type="ECO:0000250" key="1"/>
<evidence type="ECO:0000255" key="2">
    <source>
        <dbReference type="PROSITE-ProRule" id="PRU00711"/>
    </source>
</evidence>
<evidence type="ECO:0000305" key="3"/>